<name>Y477_PARUW</name>
<feature type="chain" id="PRO_1000003789" description="Nucleoid-associated protein pc0477">
    <location>
        <begin position="1"/>
        <end position="98"/>
    </location>
</feature>
<keyword id="KW-0963">Cytoplasm</keyword>
<keyword id="KW-0238">DNA-binding</keyword>
<keyword id="KW-1185">Reference proteome</keyword>
<reference key="1">
    <citation type="journal article" date="2004" name="Science">
        <title>Illuminating the evolutionary history of chlamydiae.</title>
        <authorList>
            <person name="Horn M."/>
            <person name="Collingro A."/>
            <person name="Schmitz-Esser S."/>
            <person name="Beier C.L."/>
            <person name="Purkhold U."/>
            <person name="Fartmann B."/>
            <person name="Brandt P."/>
            <person name="Nyakatura G.J."/>
            <person name="Droege M."/>
            <person name="Frishman D."/>
            <person name="Rattei T."/>
            <person name="Mewes H.-W."/>
            <person name="Wagner M."/>
        </authorList>
    </citation>
    <scope>NUCLEOTIDE SEQUENCE [LARGE SCALE GENOMIC DNA]</scope>
    <source>
        <strain>UWE25</strain>
    </source>
</reference>
<dbReference type="EMBL" id="BX908798">
    <property type="protein sequence ID" value="CAF23201.1"/>
    <property type="molecule type" value="Genomic_DNA"/>
</dbReference>
<dbReference type="RefSeq" id="WP_011175027.1">
    <property type="nucleotide sequence ID" value="NC_005861.2"/>
</dbReference>
<dbReference type="SMR" id="Q6MDZ8"/>
<dbReference type="STRING" id="264201.pc0477"/>
<dbReference type="KEGG" id="pcu:PC_RS02325"/>
<dbReference type="eggNOG" id="COG0718">
    <property type="taxonomic scope" value="Bacteria"/>
</dbReference>
<dbReference type="HOGENOM" id="CLU_140930_2_2_0"/>
<dbReference type="OrthoDB" id="19046at2"/>
<dbReference type="Proteomes" id="UP000000529">
    <property type="component" value="Chromosome"/>
</dbReference>
<dbReference type="GO" id="GO:0043590">
    <property type="term" value="C:bacterial nucleoid"/>
    <property type="evidence" value="ECO:0007669"/>
    <property type="project" value="UniProtKB-UniRule"/>
</dbReference>
<dbReference type="GO" id="GO:0005829">
    <property type="term" value="C:cytosol"/>
    <property type="evidence" value="ECO:0007669"/>
    <property type="project" value="TreeGrafter"/>
</dbReference>
<dbReference type="GO" id="GO:0003677">
    <property type="term" value="F:DNA binding"/>
    <property type="evidence" value="ECO:0007669"/>
    <property type="project" value="UniProtKB-UniRule"/>
</dbReference>
<dbReference type="Gene3D" id="3.30.1310.10">
    <property type="entry name" value="Nucleoid-associated protein YbaB-like domain"/>
    <property type="match status" value="1"/>
</dbReference>
<dbReference type="HAMAP" id="MF_00274">
    <property type="entry name" value="DNA_YbaB_EbfC"/>
    <property type="match status" value="1"/>
</dbReference>
<dbReference type="InterPro" id="IPR036894">
    <property type="entry name" value="YbaB-like_sf"/>
</dbReference>
<dbReference type="InterPro" id="IPR004401">
    <property type="entry name" value="YbaB/EbfC"/>
</dbReference>
<dbReference type="NCBIfam" id="TIGR00103">
    <property type="entry name" value="DNA_YbaB_EbfC"/>
    <property type="match status" value="1"/>
</dbReference>
<dbReference type="PANTHER" id="PTHR33449">
    <property type="entry name" value="NUCLEOID-ASSOCIATED PROTEIN YBAB"/>
    <property type="match status" value="1"/>
</dbReference>
<dbReference type="PANTHER" id="PTHR33449:SF1">
    <property type="entry name" value="NUCLEOID-ASSOCIATED PROTEIN YBAB"/>
    <property type="match status" value="1"/>
</dbReference>
<dbReference type="Pfam" id="PF02575">
    <property type="entry name" value="YbaB_DNA_bd"/>
    <property type="match status" value="1"/>
</dbReference>
<dbReference type="PIRSF" id="PIRSF004555">
    <property type="entry name" value="UCP004555"/>
    <property type="match status" value="1"/>
</dbReference>
<dbReference type="SUPFAM" id="SSF82607">
    <property type="entry name" value="YbaB-like"/>
    <property type="match status" value="1"/>
</dbReference>
<protein>
    <recommendedName>
        <fullName evidence="1">Nucleoid-associated protein pc0477</fullName>
    </recommendedName>
</protein>
<comment type="function">
    <text evidence="1">Binds to DNA and alters its conformation. May be involved in regulation of gene expression, nucleoid organization and DNA protection.</text>
</comment>
<comment type="subunit">
    <text evidence="1">Homodimer.</text>
</comment>
<comment type="subcellular location">
    <subcellularLocation>
        <location evidence="1">Cytoplasm</location>
        <location evidence="1">Nucleoid</location>
    </subcellularLocation>
</comment>
<comment type="similarity">
    <text evidence="1">Belongs to the YbaB/EbfC family.</text>
</comment>
<evidence type="ECO:0000255" key="1">
    <source>
        <dbReference type="HAMAP-Rule" id="MF_00274"/>
    </source>
</evidence>
<accession>Q6MDZ8</accession>
<sequence>MGTGFSKKKKEARLIQQQMSLVQNELQNLEVVGVAGSGLVTITLTGDGEMKQVKIKPECVDVEDLEGLEMLIRAAHADAHKRLKEQSPPIPGFPGFLA</sequence>
<proteinExistence type="inferred from homology"/>
<organism>
    <name type="scientific">Protochlamydia amoebophila (strain UWE25)</name>
    <dbReference type="NCBI Taxonomy" id="264201"/>
    <lineage>
        <taxon>Bacteria</taxon>
        <taxon>Pseudomonadati</taxon>
        <taxon>Chlamydiota</taxon>
        <taxon>Chlamydiia</taxon>
        <taxon>Parachlamydiales</taxon>
        <taxon>Parachlamydiaceae</taxon>
        <taxon>Candidatus Protochlamydia</taxon>
    </lineage>
</organism>
<gene>
    <name type="ordered locus">pc0477</name>
</gene>